<organism>
    <name type="scientific">Homo sapiens</name>
    <name type="common">Human</name>
    <dbReference type="NCBI Taxonomy" id="9606"/>
    <lineage>
        <taxon>Eukaryota</taxon>
        <taxon>Metazoa</taxon>
        <taxon>Chordata</taxon>
        <taxon>Craniata</taxon>
        <taxon>Vertebrata</taxon>
        <taxon>Euteleostomi</taxon>
        <taxon>Mammalia</taxon>
        <taxon>Eutheria</taxon>
        <taxon>Euarchontoglires</taxon>
        <taxon>Primates</taxon>
        <taxon>Haplorrhini</taxon>
        <taxon>Catarrhini</taxon>
        <taxon>Hominidae</taxon>
        <taxon>Homo</taxon>
    </lineage>
</organism>
<comment type="function">
    <text evidence="5">Regulator of the Hippo signaling pathway, also known as the Salvador-Warts-Hippo (SWH) pathway. Enhances phosphorylation of LATS1 and YAP1 and negatively regulates cell proliferation and organ growth due to a suppression of the transcriptional activity of YAP1, the major effector of the Hippo pathway.</text>
</comment>
<comment type="subunit">
    <text evidence="5">Forms homodimers and heterodimers with WWC1 and WWC2. Interacts with DLC1 and PRKCZ. Interacts (via WW domains) with LATS1 and LATS2.</text>
</comment>
<comment type="subcellular location">
    <subcellularLocation>
        <location evidence="5">Cytoplasm</location>
        <location evidence="5">Cytosol</location>
    </subcellularLocation>
</comment>
<comment type="alternative products">
    <event type="alternative splicing"/>
    <isoform>
        <id>Q9ULE0-1</id>
        <name>1</name>
        <sequence type="displayed"/>
    </isoform>
    <isoform>
        <id>Q9ULE0-2</id>
        <name>2</name>
        <sequence type="described" ref="VSP_029220 VSP_029221"/>
    </isoform>
</comment>
<comment type="similarity">
    <text evidence="7">Belongs to the WWC family.</text>
</comment>
<comment type="sequence caution" evidence="7">
    <conflict type="erroneous initiation">
        <sequence resource="EMBL-CDS" id="BAF85650"/>
    </conflict>
    <text>Truncated N-terminus.</text>
</comment>
<comment type="sequence caution" evidence="7">
    <conflict type="erroneous gene model prediction">
        <sequence resource="EMBL-CDS" id="EAW98775"/>
    </conflict>
</comment>
<comment type="sequence caution" evidence="7">
    <molecule>Isoform 2</molecule>
    <conflict type="frameshift">
        <sequence resource="EMBL-CDS" id="CAH56367"/>
    </conflict>
</comment>
<reference key="1">
    <citation type="journal article" date="2014" name="Mol. Biol. Evol.">
        <title>Evolutionary and Molecular Facts Link the WWC Protein Family to Hippo Signaling.</title>
        <authorList>
            <person name="Wennmann D.O."/>
            <person name="Schmitz J."/>
            <person name="Wehr M.C."/>
            <person name="Krahn M.P."/>
            <person name="Koschmal N."/>
            <person name="Gromnitza S."/>
            <person name="Schulze U."/>
            <person name="Weide T."/>
            <person name="Chekuri A."/>
            <person name="Skryabin B.V."/>
            <person name="Gerke V."/>
            <person name="Pavenstadt H."/>
            <person name="Duning K."/>
            <person name="Kremerskothen J."/>
        </authorList>
    </citation>
    <scope>NUCLEOTIDE SEQUENCE [MRNA]</scope>
    <scope>FUNCTION</scope>
    <scope>SUBUNIT</scope>
    <scope>SUBCELLULAR LOCATION</scope>
    <scope>INTERACTION WITH DLC1; PRKCZ; LATS1 AND LATS2</scope>
</reference>
<reference key="2">
    <citation type="journal article" date="2005" name="Nature">
        <title>The DNA sequence of the human X chromosome.</title>
        <authorList>
            <person name="Ross M.T."/>
            <person name="Grafham D.V."/>
            <person name="Coffey A.J."/>
            <person name="Scherer S."/>
            <person name="McLay K."/>
            <person name="Muzny D."/>
            <person name="Platzer M."/>
            <person name="Howell G.R."/>
            <person name="Burrows C."/>
            <person name="Bird C.P."/>
            <person name="Frankish A."/>
            <person name="Lovell F.L."/>
            <person name="Howe K.L."/>
            <person name="Ashurst J.L."/>
            <person name="Fulton R.S."/>
            <person name="Sudbrak R."/>
            <person name="Wen G."/>
            <person name="Jones M.C."/>
            <person name="Hurles M.E."/>
            <person name="Andrews T.D."/>
            <person name="Scott C.E."/>
            <person name="Searle S."/>
            <person name="Ramser J."/>
            <person name="Whittaker A."/>
            <person name="Deadman R."/>
            <person name="Carter N.P."/>
            <person name="Hunt S.E."/>
            <person name="Chen R."/>
            <person name="Cree A."/>
            <person name="Gunaratne P."/>
            <person name="Havlak P."/>
            <person name="Hodgson A."/>
            <person name="Metzker M.L."/>
            <person name="Richards S."/>
            <person name="Scott G."/>
            <person name="Steffen D."/>
            <person name="Sodergren E."/>
            <person name="Wheeler D.A."/>
            <person name="Worley K.C."/>
            <person name="Ainscough R."/>
            <person name="Ambrose K.D."/>
            <person name="Ansari-Lari M.A."/>
            <person name="Aradhya S."/>
            <person name="Ashwell R.I."/>
            <person name="Babbage A.K."/>
            <person name="Bagguley C.L."/>
            <person name="Ballabio A."/>
            <person name="Banerjee R."/>
            <person name="Barker G.E."/>
            <person name="Barlow K.F."/>
            <person name="Barrett I.P."/>
            <person name="Bates K.N."/>
            <person name="Beare D.M."/>
            <person name="Beasley H."/>
            <person name="Beasley O."/>
            <person name="Beck A."/>
            <person name="Bethel G."/>
            <person name="Blechschmidt K."/>
            <person name="Brady N."/>
            <person name="Bray-Allen S."/>
            <person name="Bridgeman A.M."/>
            <person name="Brown A.J."/>
            <person name="Brown M.J."/>
            <person name="Bonnin D."/>
            <person name="Bruford E.A."/>
            <person name="Buhay C."/>
            <person name="Burch P."/>
            <person name="Burford D."/>
            <person name="Burgess J."/>
            <person name="Burrill W."/>
            <person name="Burton J."/>
            <person name="Bye J.M."/>
            <person name="Carder C."/>
            <person name="Carrel L."/>
            <person name="Chako J."/>
            <person name="Chapman J.C."/>
            <person name="Chavez D."/>
            <person name="Chen E."/>
            <person name="Chen G."/>
            <person name="Chen Y."/>
            <person name="Chen Z."/>
            <person name="Chinault C."/>
            <person name="Ciccodicola A."/>
            <person name="Clark S.Y."/>
            <person name="Clarke G."/>
            <person name="Clee C.M."/>
            <person name="Clegg S."/>
            <person name="Clerc-Blankenburg K."/>
            <person name="Clifford K."/>
            <person name="Cobley V."/>
            <person name="Cole C.G."/>
            <person name="Conquer J.S."/>
            <person name="Corby N."/>
            <person name="Connor R.E."/>
            <person name="David R."/>
            <person name="Davies J."/>
            <person name="Davis C."/>
            <person name="Davis J."/>
            <person name="Delgado O."/>
            <person name="Deshazo D."/>
            <person name="Dhami P."/>
            <person name="Ding Y."/>
            <person name="Dinh H."/>
            <person name="Dodsworth S."/>
            <person name="Draper H."/>
            <person name="Dugan-Rocha S."/>
            <person name="Dunham A."/>
            <person name="Dunn M."/>
            <person name="Durbin K.J."/>
            <person name="Dutta I."/>
            <person name="Eades T."/>
            <person name="Ellwood M."/>
            <person name="Emery-Cohen A."/>
            <person name="Errington H."/>
            <person name="Evans K.L."/>
            <person name="Faulkner L."/>
            <person name="Francis F."/>
            <person name="Frankland J."/>
            <person name="Fraser A.E."/>
            <person name="Galgoczy P."/>
            <person name="Gilbert J."/>
            <person name="Gill R."/>
            <person name="Gloeckner G."/>
            <person name="Gregory S.G."/>
            <person name="Gribble S."/>
            <person name="Griffiths C."/>
            <person name="Grocock R."/>
            <person name="Gu Y."/>
            <person name="Gwilliam R."/>
            <person name="Hamilton C."/>
            <person name="Hart E.A."/>
            <person name="Hawes A."/>
            <person name="Heath P.D."/>
            <person name="Heitmann K."/>
            <person name="Hennig S."/>
            <person name="Hernandez J."/>
            <person name="Hinzmann B."/>
            <person name="Ho S."/>
            <person name="Hoffs M."/>
            <person name="Howden P.J."/>
            <person name="Huckle E.J."/>
            <person name="Hume J."/>
            <person name="Hunt P.J."/>
            <person name="Hunt A.R."/>
            <person name="Isherwood J."/>
            <person name="Jacob L."/>
            <person name="Johnson D."/>
            <person name="Jones S."/>
            <person name="de Jong P.J."/>
            <person name="Joseph S.S."/>
            <person name="Keenan S."/>
            <person name="Kelly S."/>
            <person name="Kershaw J.K."/>
            <person name="Khan Z."/>
            <person name="Kioschis P."/>
            <person name="Klages S."/>
            <person name="Knights A.J."/>
            <person name="Kosiura A."/>
            <person name="Kovar-Smith C."/>
            <person name="Laird G.K."/>
            <person name="Langford C."/>
            <person name="Lawlor S."/>
            <person name="Leversha M."/>
            <person name="Lewis L."/>
            <person name="Liu W."/>
            <person name="Lloyd C."/>
            <person name="Lloyd D.M."/>
            <person name="Loulseged H."/>
            <person name="Loveland J.E."/>
            <person name="Lovell J.D."/>
            <person name="Lozado R."/>
            <person name="Lu J."/>
            <person name="Lyne R."/>
            <person name="Ma J."/>
            <person name="Maheshwari M."/>
            <person name="Matthews L.H."/>
            <person name="McDowall J."/>
            <person name="McLaren S."/>
            <person name="McMurray A."/>
            <person name="Meidl P."/>
            <person name="Meitinger T."/>
            <person name="Milne S."/>
            <person name="Miner G."/>
            <person name="Mistry S.L."/>
            <person name="Morgan M."/>
            <person name="Morris S."/>
            <person name="Mueller I."/>
            <person name="Mullikin J.C."/>
            <person name="Nguyen N."/>
            <person name="Nordsiek G."/>
            <person name="Nyakatura G."/>
            <person name="O'dell C.N."/>
            <person name="Okwuonu G."/>
            <person name="Palmer S."/>
            <person name="Pandian R."/>
            <person name="Parker D."/>
            <person name="Parrish J."/>
            <person name="Pasternak S."/>
            <person name="Patel D."/>
            <person name="Pearce A.V."/>
            <person name="Pearson D.M."/>
            <person name="Pelan S.E."/>
            <person name="Perez L."/>
            <person name="Porter K.M."/>
            <person name="Ramsey Y."/>
            <person name="Reichwald K."/>
            <person name="Rhodes S."/>
            <person name="Ridler K.A."/>
            <person name="Schlessinger D."/>
            <person name="Schueler M.G."/>
            <person name="Sehra H.K."/>
            <person name="Shaw-Smith C."/>
            <person name="Shen H."/>
            <person name="Sheridan E.M."/>
            <person name="Shownkeen R."/>
            <person name="Skuce C.D."/>
            <person name="Smith M.L."/>
            <person name="Sotheran E.C."/>
            <person name="Steingruber H.E."/>
            <person name="Steward C.A."/>
            <person name="Storey R."/>
            <person name="Swann R.M."/>
            <person name="Swarbreck D."/>
            <person name="Tabor P.E."/>
            <person name="Taudien S."/>
            <person name="Taylor T."/>
            <person name="Teague B."/>
            <person name="Thomas K."/>
            <person name="Thorpe A."/>
            <person name="Timms K."/>
            <person name="Tracey A."/>
            <person name="Trevanion S."/>
            <person name="Tromans A.C."/>
            <person name="d'Urso M."/>
            <person name="Verduzco D."/>
            <person name="Villasana D."/>
            <person name="Waldron L."/>
            <person name="Wall M."/>
            <person name="Wang Q."/>
            <person name="Warren J."/>
            <person name="Warry G.L."/>
            <person name="Wei X."/>
            <person name="West A."/>
            <person name="Whitehead S.L."/>
            <person name="Whiteley M.N."/>
            <person name="Wilkinson J.E."/>
            <person name="Willey D.L."/>
            <person name="Williams G."/>
            <person name="Williams L."/>
            <person name="Williamson A."/>
            <person name="Williamson H."/>
            <person name="Wilming L."/>
            <person name="Woodmansey R.L."/>
            <person name="Wray P.W."/>
            <person name="Yen J."/>
            <person name="Zhang J."/>
            <person name="Zhou J."/>
            <person name="Zoghbi H."/>
            <person name="Zorilla S."/>
            <person name="Buck D."/>
            <person name="Reinhardt R."/>
            <person name="Poustka A."/>
            <person name="Rosenthal A."/>
            <person name="Lehrach H."/>
            <person name="Meindl A."/>
            <person name="Minx P.J."/>
            <person name="Hillier L.W."/>
            <person name="Willard H.F."/>
            <person name="Wilson R.K."/>
            <person name="Waterston R.H."/>
            <person name="Rice C.M."/>
            <person name="Vaudin M."/>
            <person name="Coulson A."/>
            <person name="Nelson D.L."/>
            <person name="Weinstock G."/>
            <person name="Sulston J.E."/>
            <person name="Durbin R.M."/>
            <person name="Hubbard T."/>
            <person name="Gibbs R.A."/>
            <person name="Beck S."/>
            <person name="Rogers J."/>
            <person name="Bentley D.R."/>
        </authorList>
    </citation>
    <scope>NUCLEOTIDE SEQUENCE [LARGE SCALE GENOMIC DNA]</scope>
</reference>
<reference key="3">
    <citation type="submission" date="2005-07" db="EMBL/GenBank/DDBJ databases">
        <authorList>
            <person name="Mural R.J."/>
            <person name="Istrail S."/>
            <person name="Sutton G.G."/>
            <person name="Florea L."/>
            <person name="Halpern A.L."/>
            <person name="Mobarry C.M."/>
            <person name="Lippert R."/>
            <person name="Walenz B."/>
            <person name="Shatkay H."/>
            <person name="Dew I."/>
            <person name="Miller J.R."/>
            <person name="Flanigan M.J."/>
            <person name="Edwards N.J."/>
            <person name="Bolanos R."/>
            <person name="Fasulo D."/>
            <person name="Halldorsson B.V."/>
            <person name="Hannenhalli S."/>
            <person name="Turner R."/>
            <person name="Yooseph S."/>
            <person name="Lu F."/>
            <person name="Nusskern D.R."/>
            <person name="Shue B.C."/>
            <person name="Zheng X.H."/>
            <person name="Zhong F."/>
            <person name="Delcher A.L."/>
            <person name="Huson D.H."/>
            <person name="Kravitz S.A."/>
            <person name="Mouchard L."/>
            <person name="Reinert K."/>
            <person name="Remington K.A."/>
            <person name="Clark A.G."/>
            <person name="Waterman M.S."/>
            <person name="Eichler E.E."/>
            <person name="Adams M.D."/>
            <person name="Hunkapiller M.W."/>
            <person name="Myers E.W."/>
            <person name="Venter J.C."/>
        </authorList>
    </citation>
    <scope>NUCLEOTIDE SEQUENCE [LARGE SCALE GENOMIC DNA]</scope>
</reference>
<reference key="4">
    <citation type="journal article" date="2004" name="Nat. Genet.">
        <title>Complete sequencing and characterization of 21,243 full-length human cDNAs.</title>
        <authorList>
            <person name="Ota T."/>
            <person name="Suzuki Y."/>
            <person name="Nishikawa T."/>
            <person name="Otsuki T."/>
            <person name="Sugiyama T."/>
            <person name="Irie R."/>
            <person name="Wakamatsu A."/>
            <person name="Hayashi K."/>
            <person name="Sato H."/>
            <person name="Nagai K."/>
            <person name="Kimura K."/>
            <person name="Makita H."/>
            <person name="Sekine M."/>
            <person name="Obayashi M."/>
            <person name="Nishi T."/>
            <person name="Shibahara T."/>
            <person name="Tanaka T."/>
            <person name="Ishii S."/>
            <person name="Yamamoto J."/>
            <person name="Saito K."/>
            <person name="Kawai Y."/>
            <person name="Isono Y."/>
            <person name="Nakamura Y."/>
            <person name="Nagahari K."/>
            <person name="Murakami K."/>
            <person name="Yasuda T."/>
            <person name="Iwayanagi T."/>
            <person name="Wagatsuma M."/>
            <person name="Shiratori A."/>
            <person name="Sudo H."/>
            <person name="Hosoiri T."/>
            <person name="Kaku Y."/>
            <person name="Kodaira H."/>
            <person name="Kondo H."/>
            <person name="Sugawara M."/>
            <person name="Takahashi M."/>
            <person name="Kanda K."/>
            <person name="Yokoi T."/>
            <person name="Furuya T."/>
            <person name="Kikkawa E."/>
            <person name="Omura Y."/>
            <person name="Abe K."/>
            <person name="Kamihara K."/>
            <person name="Katsuta N."/>
            <person name="Sato K."/>
            <person name="Tanikawa M."/>
            <person name="Yamazaki M."/>
            <person name="Ninomiya K."/>
            <person name="Ishibashi T."/>
            <person name="Yamashita H."/>
            <person name="Murakawa K."/>
            <person name="Fujimori K."/>
            <person name="Tanai H."/>
            <person name="Kimata M."/>
            <person name="Watanabe M."/>
            <person name="Hiraoka S."/>
            <person name="Chiba Y."/>
            <person name="Ishida S."/>
            <person name="Ono Y."/>
            <person name="Takiguchi S."/>
            <person name="Watanabe S."/>
            <person name="Yosida M."/>
            <person name="Hotuta T."/>
            <person name="Kusano J."/>
            <person name="Kanehori K."/>
            <person name="Takahashi-Fujii A."/>
            <person name="Hara H."/>
            <person name="Tanase T.-O."/>
            <person name="Nomura Y."/>
            <person name="Togiya S."/>
            <person name="Komai F."/>
            <person name="Hara R."/>
            <person name="Takeuchi K."/>
            <person name="Arita M."/>
            <person name="Imose N."/>
            <person name="Musashino K."/>
            <person name="Yuuki H."/>
            <person name="Oshima A."/>
            <person name="Sasaki N."/>
            <person name="Aotsuka S."/>
            <person name="Yoshikawa Y."/>
            <person name="Matsunawa H."/>
            <person name="Ichihara T."/>
            <person name="Shiohata N."/>
            <person name="Sano S."/>
            <person name="Moriya S."/>
            <person name="Momiyama H."/>
            <person name="Satoh N."/>
            <person name="Takami S."/>
            <person name="Terashima Y."/>
            <person name="Suzuki O."/>
            <person name="Nakagawa S."/>
            <person name="Senoh A."/>
            <person name="Mizoguchi H."/>
            <person name="Goto Y."/>
            <person name="Shimizu F."/>
            <person name="Wakebe H."/>
            <person name="Hishigaki H."/>
            <person name="Watanabe T."/>
            <person name="Sugiyama A."/>
            <person name="Takemoto M."/>
            <person name="Kawakami B."/>
            <person name="Yamazaki M."/>
            <person name="Watanabe K."/>
            <person name="Kumagai A."/>
            <person name="Itakura S."/>
            <person name="Fukuzumi Y."/>
            <person name="Fujimori Y."/>
            <person name="Komiyama M."/>
            <person name="Tashiro H."/>
            <person name="Tanigami A."/>
            <person name="Fujiwara T."/>
            <person name="Ono T."/>
            <person name="Yamada K."/>
            <person name="Fujii Y."/>
            <person name="Ozaki K."/>
            <person name="Hirao M."/>
            <person name="Ohmori Y."/>
            <person name="Kawabata A."/>
            <person name="Hikiji T."/>
            <person name="Kobatake N."/>
            <person name="Inagaki H."/>
            <person name="Ikema Y."/>
            <person name="Okamoto S."/>
            <person name="Okitani R."/>
            <person name="Kawakami T."/>
            <person name="Noguchi S."/>
            <person name="Itoh T."/>
            <person name="Shigeta K."/>
            <person name="Senba T."/>
            <person name="Matsumura K."/>
            <person name="Nakajima Y."/>
            <person name="Mizuno T."/>
            <person name="Morinaga M."/>
            <person name="Sasaki M."/>
            <person name="Togashi T."/>
            <person name="Oyama M."/>
            <person name="Hata H."/>
            <person name="Watanabe M."/>
            <person name="Komatsu T."/>
            <person name="Mizushima-Sugano J."/>
            <person name="Satoh T."/>
            <person name="Shirai Y."/>
            <person name="Takahashi Y."/>
            <person name="Nakagawa K."/>
            <person name="Okumura K."/>
            <person name="Nagase T."/>
            <person name="Nomura N."/>
            <person name="Kikuchi H."/>
            <person name="Masuho Y."/>
            <person name="Yamashita R."/>
            <person name="Nakai K."/>
            <person name="Yada T."/>
            <person name="Nakamura Y."/>
            <person name="Ohara O."/>
            <person name="Isogai T."/>
            <person name="Sugano S."/>
        </authorList>
    </citation>
    <scope>NUCLEOTIDE SEQUENCE [LARGE SCALE MRNA] OF 99-1216 (ISOFORM 1)</scope>
    <source>
        <tissue>Trachea</tissue>
    </source>
</reference>
<reference key="5">
    <citation type="journal article" date="1999" name="DNA Res.">
        <title>Prediction of the coding sequences of unidentified human genes. XV. The complete sequences of 100 new cDNA clones from brain which code for large proteins in vitro.</title>
        <authorList>
            <person name="Nagase T."/>
            <person name="Ishikawa K."/>
            <person name="Kikuno R."/>
            <person name="Hirosawa M."/>
            <person name="Nomura N."/>
            <person name="Ohara O."/>
        </authorList>
    </citation>
    <scope>NUCLEOTIDE SEQUENCE [LARGE SCALE MRNA] OF 185-1216 (ISOFORM 1)</scope>
    <source>
        <tissue>Brain</tissue>
    </source>
</reference>
<reference key="6">
    <citation type="journal article" date="2007" name="BMC Genomics">
        <title>The full-ORF clone resource of the German cDNA consortium.</title>
        <authorList>
            <person name="Bechtel S."/>
            <person name="Rosenfelder H."/>
            <person name="Duda A."/>
            <person name="Schmidt C.P."/>
            <person name="Ernst U."/>
            <person name="Wellenreuther R."/>
            <person name="Mehrle A."/>
            <person name="Schuster C."/>
            <person name="Bahr A."/>
            <person name="Bloecker H."/>
            <person name="Heubner D."/>
            <person name="Hoerlein A."/>
            <person name="Michel G."/>
            <person name="Wedler H."/>
            <person name="Koehrer K."/>
            <person name="Ottenwaelder B."/>
            <person name="Poustka A."/>
            <person name="Wiemann S."/>
            <person name="Schupp I."/>
        </authorList>
    </citation>
    <scope>NUCLEOTIDE SEQUENCE [LARGE SCALE MRNA] OF 233-1216 (ISOFORM 2)</scope>
    <source>
        <tissue>Amygdala</tissue>
    </source>
</reference>
<reference key="7">
    <citation type="journal article" date="2004" name="Genome Res.">
        <title>The status, quality, and expansion of the NIH full-length cDNA project: the Mammalian Gene Collection (MGC).</title>
        <authorList>
            <consortium name="The MGC Project Team"/>
        </authorList>
    </citation>
    <scope>NUCLEOTIDE SEQUENCE [LARGE SCALE MRNA] OF 1000-1216 (ISOFORM 1)</scope>
    <source>
        <tissue>Uterus</tissue>
    </source>
</reference>
<reference key="8">
    <citation type="journal article" date="2008" name="Proc. Natl. Acad. Sci. U.S.A.">
        <title>A quantitative atlas of mitotic phosphorylation.</title>
        <authorList>
            <person name="Dephoure N."/>
            <person name="Zhou C."/>
            <person name="Villen J."/>
            <person name="Beausoleil S.A."/>
            <person name="Bakalarski C.E."/>
            <person name="Elledge S.J."/>
            <person name="Gygi S.P."/>
        </authorList>
    </citation>
    <scope>IDENTIFICATION BY MASS SPECTROMETRY [LARGE SCALE ANALYSIS]</scope>
    <source>
        <tissue>Cervix carcinoma</tissue>
    </source>
</reference>
<reference key="9">
    <citation type="journal article" date="2014" name="J. Proteomics">
        <title>An enzyme assisted RP-RPLC approach for in-depth analysis of human liver phosphoproteome.</title>
        <authorList>
            <person name="Bian Y."/>
            <person name="Song C."/>
            <person name="Cheng K."/>
            <person name="Dong M."/>
            <person name="Wang F."/>
            <person name="Huang J."/>
            <person name="Sun D."/>
            <person name="Wang L."/>
            <person name="Ye M."/>
            <person name="Zou H."/>
        </authorList>
    </citation>
    <scope>IDENTIFICATION BY MASS SPECTROMETRY [LARGE SCALE ANALYSIS]</scope>
    <source>
        <tissue>Liver</tissue>
    </source>
</reference>
<feature type="chain" id="PRO_0000244494" description="Protein WWC3">
    <location>
        <begin position="1"/>
        <end position="1216"/>
    </location>
</feature>
<feature type="domain" description="WW 1" evidence="3">
    <location>
        <begin position="59"/>
        <end position="92"/>
    </location>
</feature>
<feature type="domain" description="WW 2" evidence="3">
    <location>
        <begin position="106"/>
        <end position="139"/>
    </location>
</feature>
<feature type="domain" description="C2" evidence="2">
    <location>
        <begin position="722"/>
        <end position="847"/>
    </location>
</feature>
<feature type="region of interest" description="Disordered" evidence="4">
    <location>
        <begin position="1"/>
        <end position="63"/>
    </location>
</feature>
<feature type="region of interest" description="Disordered" evidence="4">
    <location>
        <begin position="487"/>
        <end position="508"/>
    </location>
</feature>
<feature type="region of interest" description="Disordered" evidence="4">
    <location>
        <begin position="546"/>
        <end position="612"/>
    </location>
</feature>
<feature type="region of interest" description="Disordered" evidence="4">
    <location>
        <begin position="634"/>
        <end position="668"/>
    </location>
</feature>
<feature type="region of interest" description="Interaction with PRKCZ" evidence="5">
    <location>
        <begin position="1060"/>
        <end position="1079"/>
    </location>
</feature>
<feature type="coiled-coil region" evidence="1">
    <location>
        <begin position="164"/>
        <end position="250"/>
    </location>
</feature>
<feature type="coiled-coil region" evidence="1">
    <location>
        <begin position="354"/>
        <end position="468"/>
    </location>
</feature>
<feature type="coiled-coil region" evidence="1">
    <location>
        <begin position="885"/>
        <end position="936"/>
    </location>
</feature>
<feature type="coiled-coil region" evidence="1">
    <location>
        <begin position="1091"/>
        <end position="1160"/>
    </location>
</feature>
<feature type="compositionally biased region" description="Pro residues" evidence="4">
    <location>
        <begin position="21"/>
        <end position="51"/>
    </location>
</feature>
<feature type="compositionally biased region" description="Low complexity" evidence="4">
    <location>
        <begin position="570"/>
        <end position="598"/>
    </location>
</feature>
<feature type="splice variant" id="VSP_029220" description="In isoform 2." evidence="6">
    <original>TVTLREDSAKRLERRARRISACLSDYSLASDSGVFEPLT</original>
    <variation>SKCSLSDSSRRQCQEVGEEGTPHLRMSVGLFASQRQWGV</variation>
    <location>
        <begin position="668"/>
        <end position="706"/>
    </location>
</feature>
<feature type="splice variant" id="VSP_029221" description="In isoform 2." evidence="6">
    <location>
        <begin position="707"/>
        <end position="1216"/>
    </location>
</feature>
<feature type="sequence variant" id="VAR_036969" description="In dbSNP:rs5934750.">
    <original>A</original>
    <variation>T</variation>
    <location>
        <position position="619"/>
    </location>
</feature>
<feature type="sequence variant" id="VAR_036970" description="In dbSNP:rs36076296.">
    <original>Y</original>
    <variation>C</variation>
    <location>
        <position position="717"/>
    </location>
</feature>
<feature type="sequence variant" id="VAR_062109" description="In dbSNP:rs55787431.">
    <original>P</original>
    <variation>L</variation>
    <location>
        <position position="955"/>
    </location>
</feature>
<feature type="sequence conflict" description="In Ref. 1; AGV22437." evidence="7" ref="1">
    <original>P</original>
    <variation>PP</variation>
    <location>
        <position position="34"/>
    </location>
</feature>
<gene>
    <name evidence="8" type="primary">WWC3</name>
    <name type="synonym">KIAA1280</name>
</gene>
<dbReference type="EMBL" id="KC987947">
    <property type="protein sequence ID" value="AGV22437.1"/>
    <property type="molecule type" value="mRNA"/>
</dbReference>
<dbReference type="EMBL" id="KF458970">
    <property type="status" value="NOT_ANNOTATED_CDS"/>
    <property type="molecule type" value="Genomic_DNA"/>
</dbReference>
<dbReference type="EMBL" id="KF458975">
    <property type="status" value="NOT_ANNOTATED_CDS"/>
    <property type="molecule type" value="Genomic_DNA"/>
</dbReference>
<dbReference type="EMBL" id="KF458977">
    <property type="status" value="NOT_ANNOTATED_CDS"/>
    <property type="molecule type" value="Genomic_DNA"/>
</dbReference>
<dbReference type="EMBL" id="KF458982">
    <property type="status" value="NOT_ANNOTATED_CDS"/>
    <property type="molecule type" value="Genomic_DNA"/>
</dbReference>
<dbReference type="EMBL" id="AC002365">
    <property type="status" value="NOT_ANNOTATED_CDS"/>
    <property type="molecule type" value="Genomic_DNA"/>
</dbReference>
<dbReference type="EMBL" id="AC002359">
    <property type="status" value="NOT_ANNOTATED_CDS"/>
    <property type="molecule type" value="Genomic_DNA"/>
</dbReference>
<dbReference type="EMBL" id="AC002364">
    <property type="status" value="NOT_ANNOTATED_CDS"/>
    <property type="molecule type" value="Genomic_DNA"/>
</dbReference>
<dbReference type="EMBL" id="AC121345">
    <property type="status" value="NOT_ANNOTATED_CDS"/>
    <property type="molecule type" value="Genomic_DNA"/>
</dbReference>
<dbReference type="EMBL" id="AK292961">
    <property type="protein sequence ID" value="BAF85650.1"/>
    <property type="status" value="ALT_INIT"/>
    <property type="molecule type" value="mRNA"/>
</dbReference>
<dbReference type="EMBL" id="AB033106">
    <property type="protein sequence ID" value="BAA86594.1"/>
    <property type="molecule type" value="mRNA"/>
</dbReference>
<dbReference type="EMBL" id="AL353937">
    <property type="protein sequence ID" value="CAH56367.1"/>
    <property type="status" value="ALT_FRAME"/>
    <property type="molecule type" value="mRNA"/>
</dbReference>
<dbReference type="EMBL" id="CH471074">
    <property type="protein sequence ID" value="EAW98775.1"/>
    <property type="status" value="ALT_SEQ"/>
    <property type="molecule type" value="Genomic_DNA"/>
</dbReference>
<dbReference type="EMBL" id="BC003527">
    <property type="protein sequence ID" value="AAH03527.1"/>
    <property type="molecule type" value="mRNA"/>
</dbReference>
<dbReference type="RefSeq" id="NP_056506.2">
    <property type="nucleotide sequence ID" value="NM_015691.3"/>
</dbReference>
<dbReference type="SMR" id="Q9ULE0"/>
<dbReference type="BioGRID" id="120944">
    <property type="interactions" value="25"/>
</dbReference>
<dbReference type="FunCoup" id="Q9ULE0">
    <property type="interactions" value="1096"/>
</dbReference>
<dbReference type="IntAct" id="Q9ULE0">
    <property type="interactions" value="3"/>
</dbReference>
<dbReference type="STRING" id="9606.ENSP00000370242"/>
<dbReference type="GlyGen" id="Q9ULE0">
    <property type="glycosylation" value="2 sites, 1 O-linked glycan (1 site)"/>
</dbReference>
<dbReference type="iPTMnet" id="Q9ULE0"/>
<dbReference type="PhosphoSitePlus" id="Q9ULE0"/>
<dbReference type="BioMuta" id="WWC3"/>
<dbReference type="DMDM" id="160261727"/>
<dbReference type="jPOST" id="Q9ULE0"/>
<dbReference type="MassIVE" id="Q9ULE0"/>
<dbReference type="PaxDb" id="9606-ENSP00000370242"/>
<dbReference type="PeptideAtlas" id="Q9ULE0"/>
<dbReference type="ProteomicsDB" id="85006">
    <molecule id="Q9ULE0-1"/>
</dbReference>
<dbReference type="ProteomicsDB" id="85007">
    <molecule id="Q9ULE0-2"/>
</dbReference>
<dbReference type="Pumba" id="Q9ULE0"/>
<dbReference type="Antibodypedia" id="49640">
    <property type="antibodies" value="81 antibodies from 18 providers"/>
</dbReference>
<dbReference type="DNASU" id="55841"/>
<dbReference type="Ensembl" id="ENST00000380861.10">
    <molecule id="Q9ULE0-1"/>
    <property type="protein sequence ID" value="ENSP00000370242.6"/>
    <property type="gene ID" value="ENSG00000047644.20"/>
</dbReference>
<dbReference type="GeneID" id="55841"/>
<dbReference type="KEGG" id="hsa:55841"/>
<dbReference type="UCSC" id="uc004csx.5">
    <molecule id="Q9ULE0-1"/>
    <property type="organism name" value="human"/>
</dbReference>
<dbReference type="AGR" id="HGNC:29237"/>
<dbReference type="CTD" id="55841"/>
<dbReference type="DisGeNET" id="55841"/>
<dbReference type="GeneCards" id="WWC3"/>
<dbReference type="HGNC" id="HGNC:29237">
    <property type="gene designation" value="WWC3"/>
</dbReference>
<dbReference type="HPA" id="ENSG00000047644">
    <property type="expression patterns" value="Low tissue specificity"/>
</dbReference>
<dbReference type="MIM" id="301089">
    <property type="type" value="gene"/>
</dbReference>
<dbReference type="neXtProt" id="NX_Q9ULE0"/>
<dbReference type="OpenTargets" id="ENSG00000047644"/>
<dbReference type="PharmGKB" id="PA143485672"/>
<dbReference type="VEuPathDB" id="HostDB:ENSG00000047644"/>
<dbReference type="eggNOG" id="KOG3209">
    <property type="taxonomic scope" value="Eukaryota"/>
</dbReference>
<dbReference type="GeneTree" id="ENSGT00410000025556"/>
<dbReference type="InParanoid" id="Q9ULE0"/>
<dbReference type="OrthoDB" id="2020426at2759"/>
<dbReference type="PAN-GO" id="Q9ULE0">
    <property type="GO annotations" value="7 GO annotations based on evolutionary models"/>
</dbReference>
<dbReference type="PhylomeDB" id="Q9ULE0"/>
<dbReference type="TreeFam" id="TF324040"/>
<dbReference type="PathwayCommons" id="Q9ULE0"/>
<dbReference type="SignaLink" id="Q9ULE0"/>
<dbReference type="BioGRID-ORCS" id="55841">
    <property type="hits" value="3 hits in 772 CRISPR screens"/>
</dbReference>
<dbReference type="ChiTaRS" id="WWC3">
    <property type="organism name" value="human"/>
</dbReference>
<dbReference type="GenomeRNAi" id="55841"/>
<dbReference type="Pharos" id="Q9ULE0">
    <property type="development level" value="Tbio"/>
</dbReference>
<dbReference type="PRO" id="PR:Q9ULE0"/>
<dbReference type="Proteomes" id="UP000005640">
    <property type="component" value="Chromosome X"/>
</dbReference>
<dbReference type="RNAct" id="Q9ULE0">
    <property type="molecule type" value="protein"/>
</dbReference>
<dbReference type="Bgee" id="ENSG00000047644">
    <property type="expression patterns" value="Expressed in secondary oocyte and 206 other cell types or tissues"/>
</dbReference>
<dbReference type="GO" id="GO:0005737">
    <property type="term" value="C:cytoplasm"/>
    <property type="evidence" value="ECO:0000314"/>
    <property type="project" value="UniProt"/>
</dbReference>
<dbReference type="GO" id="GO:0005829">
    <property type="term" value="C:cytosol"/>
    <property type="evidence" value="ECO:0000314"/>
    <property type="project" value="BHF-UCL"/>
</dbReference>
<dbReference type="GO" id="GO:0019900">
    <property type="term" value="F:kinase binding"/>
    <property type="evidence" value="ECO:0000353"/>
    <property type="project" value="BHF-UCL"/>
</dbReference>
<dbReference type="GO" id="GO:0060090">
    <property type="term" value="F:molecular adaptor activity"/>
    <property type="evidence" value="ECO:0000314"/>
    <property type="project" value="BHF-UCL"/>
</dbReference>
<dbReference type="GO" id="GO:0035591">
    <property type="term" value="F:signaling adaptor activity"/>
    <property type="evidence" value="ECO:0000314"/>
    <property type="project" value="UniProt"/>
</dbReference>
<dbReference type="GO" id="GO:0016477">
    <property type="term" value="P:cell migration"/>
    <property type="evidence" value="ECO:0000318"/>
    <property type="project" value="GO_Central"/>
</dbReference>
<dbReference type="GO" id="GO:0035329">
    <property type="term" value="P:hippo signaling"/>
    <property type="evidence" value="ECO:0000314"/>
    <property type="project" value="UniProt"/>
</dbReference>
<dbReference type="GO" id="GO:0008285">
    <property type="term" value="P:negative regulation of cell population proliferation"/>
    <property type="evidence" value="ECO:0000315"/>
    <property type="project" value="UniProtKB"/>
</dbReference>
<dbReference type="GO" id="GO:0035331">
    <property type="term" value="P:negative regulation of hippo signaling"/>
    <property type="evidence" value="ECO:0000314"/>
    <property type="project" value="BHF-UCL"/>
</dbReference>
<dbReference type="GO" id="GO:0046621">
    <property type="term" value="P:negative regulation of organ growth"/>
    <property type="evidence" value="ECO:0000315"/>
    <property type="project" value="BHF-UCL"/>
</dbReference>
<dbReference type="GO" id="GO:0000122">
    <property type="term" value="P:negative regulation of transcription by RNA polymerase II"/>
    <property type="evidence" value="ECO:0000314"/>
    <property type="project" value="BHF-UCL"/>
</dbReference>
<dbReference type="GO" id="GO:0006355">
    <property type="term" value="P:regulation of DNA-templated transcription"/>
    <property type="evidence" value="ECO:0000318"/>
    <property type="project" value="GO_Central"/>
</dbReference>
<dbReference type="GO" id="GO:0035330">
    <property type="term" value="P:regulation of hippo signaling"/>
    <property type="evidence" value="ECO:0000318"/>
    <property type="project" value="GO_Central"/>
</dbReference>
<dbReference type="CDD" id="cd08680">
    <property type="entry name" value="C2_Kibra"/>
    <property type="match status" value="1"/>
</dbReference>
<dbReference type="CDD" id="cd00201">
    <property type="entry name" value="WW"/>
    <property type="match status" value="2"/>
</dbReference>
<dbReference type="FunFam" id="2.20.70.10:FF:000041">
    <property type="entry name" value="WW and C2 domain containing 1"/>
    <property type="match status" value="1"/>
</dbReference>
<dbReference type="FunFam" id="2.60.40.150:FF:000225">
    <property type="entry name" value="WWC family member 3"/>
    <property type="match status" value="1"/>
</dbReference>
<dbReference type="Gene3D" id="2.20.70.10">
    <property type="match status" value="2"/>
</dbReference>
<dbReference type="Gene3D" id="2.60.40.150">
    <property type="entry name" value="C2 domain"/>
    <property type="match status" value="1"/>
</dbReference>
<dbReference type="InterPro" id="IPR000008">
    <property type="entry name" value="C2_dom"/>
</dbReference>
<dbReference type="InterPro" id="IPR035892">
    <property type="entry name" value="C2_domain_sf"/>
</dbReference>
<dbReference type="InterPro" id="IPR037771">
    <property type="entry name" value="C2_WWC"/>
</dbReference>
<dbReference type="InterPro" id="IPR001202">
    <property type="entry name" value="WW_dom"/>
</dbReference>
<dbReference type="InterPro" id="IPR036020">
    <property type="entry name" value="WW_dom_sf"/>
</dbReference>
<dbReference type="InterPro" id="IPR051105">
    <property type="entry name" value="WWC/KIBRA_Hippo_Reg"/>
</dbReference>
<dbReference type="PANTHER" id="PTHR14791">
    <property type="entry name" value="BOMB/KIRA PROTEINS"/>
    <property type="match status" value="1"/>
</dbReference>
<dbReference type="PANTHER" id="PTHR14791:SF25">
    <property type="entry name" value="PROTEIN WWC3"/>
    <property type="match status" value="1"/>
</dbReference>
<dbReference type="Pfam" id="PF00397">
    <property type="entry name" value="WW"/>
    <property type="match status" value="1"/>
</dbReference>
<dbReference type="SMART" id="SM00456">
    <property type="entry name" value="WW"/>
    <property type="match status" value="2"/>
</dbReference>
<dbReference type="SUPFAM" id="SSF49562">
    <property type="entry name" value="C2 domain (Calcium/lipid-binding domain, CaLB)"/>
    <property type="match status" value="1"/>
</dbReference>
<dbReference type="SUPFAM" id="SSF51045">
    <property type="entry name" value="WW domain"/>
    <property type="match status" value="2"/>
</dbReference>
<dbReference type="PROSITE" id="PS50004">
    <property type="entry name" value="C2"/>
    <property type="match status" value="1"/>
</dbReference>
<dbReference type="PROSITE" id="PS01159">
    <property type="entry name" value="WW_DOMAIN_1"/>
    <property type="match status" value="1"/>
</dbReference>
<dbReference type="PROSITE" id="PS50020">
    <property type="entry name" value="WW_DOMAIN_2"/>
    <property type="match status" value="2"/>
</dbReference>
<sequence length="1216" mass="136649">MPWLSGGRRRRRGQPREAPREPPPSAQPQREPPPAPPAAVPTPPAPSAPPPRARESAELPLPAGWEEARDYDGRVFYIDHNTRQTSWIDPRDRITKPLTFADCVGDELPLGWETVYDKQIGVYYMDHINKLTQIEDPREQWRREQERMLKEYLIVAQEALNAKKEIYQIKQQRFELAQEEYQQLHKMCEDDSRSYASSFSGYSTNTKYDPHQIKAEIASRRDRLSRLKRELTQMKQELQYKEKGVETLQEIDRKMSSTHTSYKLDEAQAIMSELRTIKKAICTGEKERRDLMHSLAKLTDSFKNSCSVTDSLVDFPHHVGVPGDAGVPQQFCDAGSQTDIIGEFVFDDKTRLVDRVRLNWQYEEARKRVANIQQQLARLDNESWPSTAEADRDRLQLIKEKEALLQELQLIIAQRRSAGDVARLEEERERLEEELRRARATSAQGATERILLQEKRNCLLMQLEEATRLTSYLQSQLKSLCASTLTVSSGSSRGSLASSRGSLASSRGSLSSVSFTDIYGLPQYEKPDAEGSQLLRFDLIPFDSLGRDAPFSEPPGPSGFHKQRRSLDTPQSLASLSSRSSLSSLSPPSSPLDTPFLPASRDSPLAQLADSCEGPGLGALDRLRAHASAMGDEDLPGMAALQPHGVPGDGEGPHERGPPPASAPVGGTVTLREDSAKRLERRARRISACLSDYSLASDSGVFEPLTKRNEDAEEPAYGDTASNGDPQIHVGLLRDSGSECLLVHVLQLKNPAGLAVKEDCKVHIRVYLPPLDSGTPNTYCSKALEFQVPLVFNEVFRIPVHSSALTLKSLQLYVCSVTPQLQEELLGIAQINLADYDSLSEMQLRWHSVQVFTSSEPSRTREAGCAGESSARDPAHTISISGKTDAVTVLLARTTAQLQAVERELAEERAKLEYTEEEVLEMERKEEQAEAISERSWQADSVDSGCSNCTQTSPPYPEPCCMGIDSILGHPFAAQAGPYSPEKFQPSPLKVDKETNTEDLFLEEAASLVKERPSRRARGSPFVRSGTIVRSQTFSPGARSQYVCRLYRSDSDSSTLPRKSPFVRNTLERRTLRYKQSCRSSLAELMARTSLDLELDLQASRTRQRQLNEELCALRELRQRLEDAQLRGQTDLPPWVLRDERLRGLLREAERQTRQTKLDYRHEQAAEKMLKKASKEIYQLRGQSHKEPIQVQTFREKIAFFTRPRINIPPLPADDV</sequence>
<evidence type="ECO:0000255" key="1"/>
<evidence type="ECO:0000255" key="2">
    <source>
        <dbReference type="PROSITE-ProRule" id="PRU00041"/>
    </source>
</evidence>
<evidence type="ECO:0000255" key="3">
    <source>
        <dbReference type="PROSITE-ProRule" id="PRU00224"/>
    </source>
</evidence>
<evidence type="ECO:0000256" key="4">
    <source>
        <dbReference type="SAM" id="MobiDB-lite"/>
    </source>
</evidence>
<evidence type="ECO:0000269" key="5">
    <source>
    </source>
</evidence>
<evidence type="ECO:0000303" key="6">
    <source>
    </source>
</evidence>
<evidence type="ECO:0000305" key="7"/>
<evidence type="ECO:0000312" key="8">
    <source>
        <dbReference type="HGNC" id="HGNC:29237"/>
    </source>
</evidence>
<name>WWC3_HUMAN</name>
<keyword id="KW-0025">Alternative splicing</keyword>
<keyword id="KW-0175">Coiled coil</keyword>
<keyword id="KW-0963">Cytoplasm</keyword>
<keyword id="KW-1267">Proteomics identification</keyword>
<keyword id="KW-1185">Reference proteome</keyword>
<keyword id="KW-0678">Repressor</keyword>
<keyword id="KW-0804">Transcription</keyword>
<keyword id="KW-0805">Transcription regulation</keyword>
<protein>
    <recommendedName>
        <fullName>Protein WWC3</fullName>
    </recommendedName>
</protein>
<proteinExistence type="evidence at protein level"/>
<accession>Q9ULE0</accession>
<accession>A8KA96</accession>
<accession>Q659C1</accession>
<accession>Q9BTQ1</accession>
<accession>T2C6S4</accession>